<sequence>MEIESGSYQNAKKESWRTVLTLAYQSLGVVYGDLSISPLYVYKSTFAEDIHHSESNEEIFGVLSFIFWTITLVPLLKYVFIVLRADDNGEGGTFALYSLLCRHARVNSLPSCQLADEQLIEYKTDSIGSSSMPQSGFAASLKSTLEKHGVLQKILLVLALIGTCMVIGDGVLTPAISVFSAVSGVELSMSKEHHKYIELPAACVILIGLFALQHYGTHRVGFLFAPVILLWLMCISAIGVYNIFHWNPHVYQALSPYYMYKFLKKTQSRGWMSLGGILLCITGSEAMFADLGHFSQLSIKIAFTSLVYPSLILAYMGQAAYLSQHHIIESEYNIGFYVSVPERLRWPVLVIAILAAVVGSQAIITGTFSIIKQCSALGCFPKVKIVHTSSKIHGQIYIPEINWILMVLCLAVTIGFRDTKRLGNASGLAVITVMLVTTCLMSLVIVLCWHKSVIFAIVFVVFFGTIESLYFSASLIKFLEGAWVPIALAFCFLLAMCTWHYGTLKRYEYDVQNKVSVNWLLSLSQTLGIARVRGLGLIHTELVSGVPAIFSHFVTNLPAFHQVLVFLCVKSVPVPHVRPQERFLVGRIGPKEFRIYRCIVRFGYRDVHKDDFEFEGDLVCSIAEFIRTEAETAATAAETNGEDDDRMSVVGTCSTYMQGIEDHYESDIDDPDKPGTSEIRSPKPKKKSKSKVKKRVRFVVPETPKIEKETRQELMELTEAREGGVAYIMGNAYMKAKPGSGLLKRLAINIGYEFLRRNTRGPRNMLTSPHASTLEVGMIYNV</sequence>
<proteinExistence type="evidence at transcript level"/>
<accession>Q8W4I4</accession>
<accession>O64607</accession>
<accession>Q9M7K0</accession>
<evidence type="ECO:0000255" key="1"/>
<evidence type="ECO:0000256" key="2">
    <source>
        <dbReference type="SAM" id="MobiDB-lite"/>
    </source>
</evidence>
<evidence type="ECO:0000305" key="3"/>
<name>POT6_ARATH</name>
<comment type="function">
    <text>Probable potassium transporter.</text>
</comment>
<comment type="subcellular location">
    <subcellularLocation>
        <location evidence="3">Cell membrane</location>
        <topology evidence="3">Multi-pass membrane protein</topology>
    </subcellularLocation>
</comment>
<comment type="similarity">
    <text evidence="3">Belongs to the HAK/KUP transporter (TC 2.A.72.3) family.</text>
</comment>
<comment type="sequence caution" evidence="3">
    <conflict type="erroneous gene model prediction">
        <sequence resource="EMBL-CDS" id="AAC18809"/>
    </conflict>
</comment>
<dbReference type="EMBL" id="AC003671">
    <property type="protein sequence ID" value="AAC18809.1"/>
    <property type="status" value="ALT_SEQ"/>
    <property type="molecule type" value="Genomic_DNA"/>
</dbReference>
<dbReference type="EMBL" id="CP002684">
    <property type="protein sequence ID" value="AEE35043.1"/>
    <property type="molecule type" value="Genomic_DNA"/>
</dbReference>
<dbReference type="EMBL" id="AY062542">
    <property type="protein sequence ID" value="AAL32620.1"/>
    <property type="molecule type" value="mRNA"/>
</dbReference>
<dbReference type="EMBL" id="AY093328">
    <property type="protein sequence ID" value="AAM13327.1"/>
    <property type="molecule type" value="mRNA"/>
</dbReference>
<dbReference type="EMBL" id="AF129482">
    <property type="protein sequence ID" value="AAF36494.1"/>
    <property type="molecule type" value="mRNA"/>
</dbReference>
<dbReference type="PIR" id="T01493">
    <property type="entry name" value="T01493"/>
</dbReference>
<dbReference type="RefSeq" id="NP_177187.2">
    <property type="nucleotide sequence ID" value="NM_105698.5"/>
</dbReference>
<dbReference type="BioGRID" id="28586">
    <property type="interactions" value="13"/>
</dbReference>
<dbReference type="FunCoup" id="Q8W4I4">
    <property type="interactions" value="15"/>
</dbReference>
<dbReference type="IntAct" id="Q8W4I4">
    <property type="interactions" value="12"/>
</dbReference>
<dbReference type="STRING" id="3702.Q8W4I4"/>
<dbReference type="PaxDb" id="3702-AT1G70300.1"/>
<dbReference type="ProteomicsDB" id="250608"/>
<dbReference type="EnsemblPlants" id="AT1G70300.1">
    <property type="protein sequence ID" value="AT1G70300.1"/>
    <property type="gene ID" value="AT1G70300"/>
</dbReference>
<dbReference type="GeneID" id="843366"/>
<dbReference type="Gramene" id="AT1G70300.1">
    <property type="protein sequence ID" value="AT1G70300.1"/>
    <property type="gene ID" value="AT1G70300"/>
</dbReference>
<dbReference type="KEGG" id="ath:AT1G70300"/>
<dbReference type="Araport" id="AT1G70300"/>
<dbReference type="TAIR" id="AT1G70300">
    <property type="gene designation" value="KUP6"/>
</dbReference>
<dbReference type="eggNOG" id="ENOG502QPSA">
    <property type="taxonomic scope" value="Eukaryota"/>
</dbReference>
<dbReference type="HOGENOM" id="CLU_008142_2_0_1"/>
<dbReference type="InParanoid" id="Q8W4I4"/>
<dbReference type="OMA" id="YMQGIED"/>
<dbReference type="PhylomeDB" id="Q8W4I4"/>
<dbReference type="PRO" id="PR:Q8W4I4"/>
<dbReference type="Proteomes" id="UP000006548">
    <property type="component" value="Chromosome 1"/>
</dbReference>
<dbReference type="ExpressionAtlas" id="Q8W4I4">
    <property type="expression patterns" value="baseline and differential"/>
</dbReference>
<dbReference type="GO" id="GO:0005886">
    <property type="term" value="C:plasma membrane"/>
    <property type="evidence" value="ECO:0007669"/>
    <property type="project" value="UniProtKB-SubCell"/>
</dbReference>
<dbReference type="GO" id="GO:0015079">
    <property type="term" value="F:potassium ion transmembrane transporter activity"/>
    <property type="evidence" value="ECO:0007669"/>
    <property type="project" value="InterPro"/>
</dbReference>
<dbReference type="InterPro" id="IPR003855">
    <property type="entry name" value="K+_transporter"/>
</dbReference>
<dbReference type="InterPro" id="IPR053952">
    <property type="entry name" value="K_trans_C"/>
</dbReference>
<dbReference type="InterPro" id="IPR053951">
    <property type="entry name" value="K_trans_N"/>
</dbReference>
<dbReference type="NCBIfam" id="TIGR00794">
    <property type="entry name" value="kup"/>
    <property type="match status" value="1"/>
</dbReference>
<dbReference type="PANTHER" id="PTHR30540">
    <property type="entry name" value="OSMOTIC STRESS POTASSIUM TRANSPORTER"/>
    <property type="match status" value="1"/>
</dbReference>
<dbReference type="PANTHER" id="PTHR30540:SF98">
    <property type="entry name" value="POTASSIUM TRANSPORTER 6"/>
    <property type="match status" value="1"/>
</dbReference>
<dbReference type="Pfam" id="PF02705">
    <property type="entry name" value="K_trans"/>
    <property type="match status" value="1"/>
</dbReference>
<dbReference type="Pfam" id="PF22776">
    <property type="entry name" value="K_trans_C"/>
    <property type="match status" value="1"/>
</dbReference>
<organism>
    <name type="scientific">Arabidopsis thaliana</name>
    <name type="common">Mouse-ear cress</name>
    <dbReference type="NCBI Taxonomy" id="3702"/>
    <lineage>
        <taxon>Eukaryota</taxon>
        <taxon>Viridiplantae</taxon>
        <taxon>Streptophyta</taxon>
        <taxon>Embryophyta</taxon>
        <taxon>Tracheophyta</taxon>
        <taxon>Spermatophyta</taxon>
        <taxon>Magnoliopsida</taxon>
        <taxon>eudicotyledons</taxon>
        <taxon>Gunneridae</taxon>
        <taxon>Pentapetalae</taxon>
        <taxon>rosids</taxon>
        <taxon>malvids</taxon>
        <taxon>Brassicales</taxon>
        <taxon>Brassicaceae</taxon>
        <taxon>Camelineae</taxon>
        <taxon>Arabidopsis</taxon>
    </lineage>
</organism>
<feature type="chain" id="PRO_0000209082" description="Potassium transporter 6">
    <location>
        <begin position="1"/>
        <end position="782"/>
    </location>
</feature>
<feature type="topological domain" description="Cytoplasmic" evidence="1">
    <location>
        <begin position="1"/>
        <end position="18"/>
    </location>
</feature>
<feature type="transmembrane region" description="Helical" evidence="1">
    <location>
        <begin position="19"/>
        <end position="39"/>
    </location>
</feature>
<feature type="topological domain" description="Extracellular" evidence="1">
    <location>
        <begin position="40"/>
        <end position="61"/>
    </location>
</feature>
<feature type="transmembrane region" description="Helical" evidence="1">
    <location>
        <begin position="62"/>
        <end position="82"/>
    </location>
</feature>
<feature type="topological domain" description="Cytoplasmic" evidence="1">
    <location>
        <begin position="83"/>
        <end position="153"/>
    </location>
</feature>
<feature type="transmembrane region" description="Helical" evidence="1">
    <location>
        <begin position="154"/>
        <end position="174"/>
    </location>
</feature>
<feature type="topological domain" description="Extracellular" evidence="1">
    <location>
        <begin position="175"/>
        <end position="195"/>
    </location>
</feature>
<feature type="transmembrane region" description="Helical" evidence="1">
    <location>
        <begin position="196"/>
        <end position="216"/>
    </location>
</feature>
<feature type="topological domain" description="Cytoplasmic" evidence="1">
    <location>
        <begin position="217"/>
        <end position="219"/>
    </location>
</feature>
<feature type="transmembrane region" description="Helical" evidence="1">
    <location>
        <begin position="220"/>
        <end position="240"/>
    </location>
</feature>
<feature type="topological domain" description="Extracellular" evidence="1">
    <location>
        <begin position="241"/>
        <end position="270"/>
    </location>
</feature>
<feature type="transmembrane region" description="Helical" evidence="1">
    <location>
        <begin position="271"/>
        <end position="291"/>
    </location>
</feature>
<feature type="topological domain" description="Cytoplasmic" evidence="1">
    <location>
        <begin position="292"/>
        <end position="296"/>
    </location>
</feature>
<feature type="transmembrane region" description="Helical" evidence="1">
    <location>
        <begin position="297"/>
        <end position="317"/>
    </location>
</feature>
<feature type="topological domain" description="Extracellular" evidence="1">
    <location>
        <begin position="318"/>
        <end position="347"/>
    </location>
</feature>
<feature type="transmembrane region" description="Helical" evidence="1">
    <location>
        <begin position="348"/>
        <end position="368"/>
    </location>
</feature>
<feature type="topological domain" description="Cytoplasmic" evidence="1">
    <location>
        <begin position="369"/>
        <end position="395"/>
    </location>
</feature>
<feature type="transmembrane region" description="Helical" evidence="1">
    <location>
        <begin position="396"/>
        <end position="416"/>
    </location>
</feature>
<feature type="topological domain" description="Extracellular" evidence="1">
    <location>
        <begin position="417"/>
        <end position="421"/>
    </location>
</feature>
<feature type="transmembrane region" description="Helical" evidence="1">
    <location>
        <begin position="422"/>
        <end position="442"/>
    </location>
</feature>
<feature type="transmembrane region" description="Helical" evidence="1">
    <location>
        <begin position="443"/>
        <end position="463"/>
    </location>
</feature>
<feature type="topological domain" description="Extracellular" evidence="1">
    <location>
        <begin position="464"/>
        <end position="474"/>
    </location>
</feature>
<feature type="transmembrane region" description="Helical" evidence="1">
    <location>
        <begin position="475"/>
        <end position="495"/>
    </location>
</feature>
<feature type="topological domain" description="Cytoplasmic" evidence="1">
    <location>
        <begin position="496"/>
        <end position="782"/>
    </location>
</feature>
<feature type="region of interest" description="Disordered" evidence="2">
    <location>
        <begin position="664"/>
        <end position="693"/>
    </location>
</feature>
<feature type="compositionally biased region" description="Basic and acidic residues" evidence="2">
    <location>
        <begin position="664"/>
        <end position="675"/>
    </location>
</feature>
<feature type="compositionally biased region" description="Basic residues" evidence="2">
    <location>
        <begin position="682"/>
        <end position="693"/>
    </location>
</feature>
<feature type="sequence conflict" description="In Ref. 4; AAF36494." evidence="3" ref="4">
    <original>V</original>
    <variation>I</variation>
    <location>
        <position position="106"/>
    </location>
</feature>
<feature type="sequence conflict" description="In Ref. 4; AAF36494." evidence="3" ref="4">
    <original>C</original>
    <variation>R</variation>
    <location>
        <position position="164"/>
    </location>
</feature>
<feature type="sequence conflict" description="In Ref. 4; AAF36494." evidence="3" ref="4">
    <original>L</original>
    <variation>W</variation>
    <location>
        <position position="209"/>
    </location>
</feature>
<feature type="sequence conflict" description="In Ref. 4; AAF36494." evidence="3" ref="4">
    <original>W</original>
    <variation>R</variation>
    <location>
        <position position="231"/>
    </location>
</feature>
<gene>
    <name type="primary">POT6</name>
    <name type="synonym">HAK6</name>
    <name type="synonym">KUP6</name>
    <name type="ordered locus">At1g70300</name>
    <name type="ORF">F17O7.17</name>
</gene>
<protein>
    <recommendedName>
        <fullName>Potassium transporter 6</fullName>
        <shortName>AtHAK6</shortName>
        <shortName>AtPOT6</shortName>
    </recommendedName>
</protein>
<keyword id="KW-1003">Cell membrane</keyword>
<keyword id="KW-0406">Ion transport</keyword>
<keyword id="KW-0472">Membrane</keyword>
<keyword id="KW-0630">Potassium</keyword>
<keyword id="KW-0633">Potassium transport</keyword>
<keyword id="KW-1185">Reference proteome</keyword>
<keyword id="KW-0812">Transmembrane</keyword>
<keyword id="KW-1133">Transmembrane helix</keyword>
<keyword id="KW-0813">Transport</keyword>
<reference key="1">
    <citation type="journal article" date="2000" name="Nature">
        <title>Sequence and analysis of chromosome 1 of the plant Arabidopsis thaliana.</title>
        <authorList>
            <person name="Theologis A."/>
            <person name="Ecker J.R."/>
            <person name="Palm C.J."/>
            <person name="Federspiel N.A."/>
            <person name="Kaul S."/>
            <person name="White O."/>
            <person name="Alonso J."/>
            <person name="Altafi H."/>
            <person name="Araujo R."/>
            <person name="Bowman C.L."/>
            <person name="Brooks S.Y."/>
            <person name="Buehler E."/>
            <person name="Chan A."/>
            <person name="Chao Q."/>
            <person name="Chen H."/>
            <person name="Cheuk R.F."/>
            <person name="Chin C.W."/>
            <person name="Chung M.K."/>
            <person name="Conn L."/>
            <person name="Conway A.B."/>
            <person name="Conway A.R."/>
            <person name="Creasy T.H."/>
            <person name="Dewar K."/>
            <person name="Dunn P."/>
            <person name="Etgu P."/>
            <person name="Feldblyum T.V."/>
            <person name="Feng J.-D."/>
            <person name="Fong B."/>
            <person name="Fujii C.Y."/>
            <person name="Gill J.E."/>
            <person name="Goldsmith A.D."/>
            <person name="Haas B."/>
            <person name="Hansen N.F."/>
            <person name="Hughes B."/>
            <person name="Huizar L."/>
            <person name="Hunter J.L."/>
            <person name="Jenkins J."/>
            <person name="Johnson-Hopson C."/>
            <person name="Khan S."/>
            <person name="Khaykin E."/>
            <person name="Kim C.J."/>
            <person name="Koo H.L."/>
            <person name="Kremenetskaia I."/>
            <person name="Kurtz D.B."/>
            <person name="Kwan A."/>
            <person name="Lam B."/>
            <person name="Langin-Hooper S."/>
            <person name="Lee A."/>
            <person name="Lee J.M."/>
            <person name="Lenz C.A."/>
            <person name="Li J.H."/>
            <person name="Li Y.-P."/>
            <person name="Lin X."/>
            <person name="Liu S.X."/>
            <person name="Liu Z.A."/>
            <person name="Luros J.S."/>
            <person name="Maiti R."/>
            <person name="Marziali A."/>
            <person name="Militscher J."/>
            <person name="Miranda M."/>
            <person name="Nguyen M."/>
            <person name="Nierman W.C."/>
            <person name="Osborne B.I."/>
            <person name="Pai G."/>
            <person name="Peterson J."/>
            <person name="Pham P.K."/>
            <person name="Rizzo M."/>
            <person name="Rooney T."/>
            <person name="Rowley D."/>
            <person name="Sakano H."/>
            <person name="Salzberg S.L."/>
            <person name="Schwartz J.R."/>
            <person name="Shinn P."/>
            <person name="Southwick A.M."/>
            <person name="Sun H."/>
            <person name="Tallon L.J."/>
            <person name="Tambunga G."/>
            <person name="Toriumi M.J."/>
            <person name="Town C.D."/>
            <person name="Utterback T."/>
            <person name="Van Aken S."/>
            <person name="Vaysberg M."/>
            <person name="Vysotskaia V.S."/>
            <person name="Walker M."/>
            <person name="Wu D."/>
            <person name="Yu G."/>
            <person name="Fraser C.M."/>
            <person name="Venter J.C."/>
            <person name="Davis R.W."/>
        </authorList>
    </citation>
    <scope>NUCLEOTIDE SEQUENCE [LARGE SCALE GENOMIC DNA]</scope>
    <source>
        <strain>cv. Columbia</strain>
    </source>
</reference>
<reference key="2">
    <citation type="journal article" date="2017" name="Plant J.">
        <title>Araport11: a complete reannotation of the Arabidopsis thaliana reference genome.</title>
        <authorList>
            <person name="Cheng C.Y."/>
            <person name="Krishnakumar V."/>
            <person name="Chan A.P."/>
            <person name="Thibaud-Nissen F."/>
            <person name="Schobel S."/>
            <person name="Town C.D."/>
        </authorList>
    </citation>
    <scope>GENOME REANNOTATION</scope>
    <source>
        <strain>cv. Columbia</strain>
    </source>
</reference>
<reference key="3">
    <citation type="journal article" date="2003" name="Science">
        <title>Empirical analysis of transcriptional activity in the Arabidopsis genome.</title>
        <authorList>
            <person name="Yamada K."/>
            <person name="Lim J."/>
            <person name="Dale J.M."/>
            <person name="Chen H."/>
            <person name="Shinn P."/>
            <person name="Palm C.J."/>
            <person name="Southwick A.M."/>
            <person name="Wu H.C."/>
            <person name="Kim C.J."/>
            <person name="Nguyen M."/>
            <person name="Pham P.K."/>
            <person name="Cheuk R.F."/>
            <person name="Karlin-Newmann G."/>
            <person name="Liu S.X."/>
            <person name="Lam B."/>
            <person name="Sakano H."/>
            <person name="Wu T."/>
            <person name="Yu G."/>
            <person name="Miranda M."/>
            <person name="Quach H.L."/>
            <person name="Tripp M."/>
            <person name="Chang C.H."/>
            <person name="Lee J.M."/>
            <person name="Toriumi M.J."/>
            <person name="Chan M.M."/>
            <person name="Tang C.C."/>
            <person name="Onodera C.S."/>
            <person name="Deng J.M."/>
            <person name="Akiyama K."/>
            <person name="Ansari Y."/>
            <person name="Arakawa T."/>
            <person name="Banh J."/>
            <person name="Banno F."/>
            <person name="Bowser L."/>
            <person name="Brooks S.Y."/>
            <person name="Carninci P."/>
            <person name="Chao Q."/>
            <person name="Choy N."/>
            <person name="Enju A."/>
            <person name="Goldsmith A.D."/>
            <person name="Gurjal M."/>
            <person name="Hansen N.F."/>
            <person name="Hayashizaki Y."/>
            <person name="Johnson-Hopson C."/>
            <person name="Hsuan V.W."/>
            <person name="Iida K."/>
            <person name="Karnes M."/>
            <person name="Khan S."/>
            <person name="Koesema E."/>
            <person name="Ishida J."/>
            <person name="Jiang P.X."/>
            <person name="Jones T."/>
            <person name="Kawai J."/>
            <person name="Kamiya A."/>
            <person name="Meyers C."/>
            <person name="Nakajima M."/>
            <person name="Narusaka M."/>
            <person name="Seki M."/>
            <person name="Sakurai T."/>
            <person name="Satou M."/>
            <person name="Tamse R."/>
            <person name="Vaysberg M."/>
            <person name="Wallender E.K."/>
            <person name="Wong C."/>
            <person name="Yamamura Y."/>
            <person name="Yuan S."/>
            <person name="Shinozaki K."/>
            <person name="Davis R.W."/>
            <person name="Theologis A."/>
            <person name="Ecker J.R."/>
        </authorList>
    </citation>
    <scope>NUCLEOTIDE SEQUENCE [LARGE SCALE MRNA]</scope>
    <source>
        <strain>cv. Columbia</strain>
    </source>
</reference>
<reference key="4">
    <citation type="journal article" date="2000" name="Physiol. Plantarum">
        <title>Cloning of Arabidopsis and barley cDNAs encoding HAK potassium transporters in root and shoot cells.</title>
        <authorList>
            <person name="Rubio F."/>
            <person name="Santa-Maria G.E."/>
            <person name="Rodriguez-Navarro A."/>
        </authorList>
    </citation>
    <scope>NUCLEOTIDE SEQUENCE [MRNA] OF 89-293</scope>
    <source>
        <strain>cv. Columbia</strain>
    </source>
</reference>
<reference key="5">
    <citation type="journal article" date="2001" name="Plant Physiol.">
        <title>Phylogenetic relationships within cation transporter families of Arabidopsis.</title>
        <authorList>
            <person name="Maeser P."/>
            <person name="Thomine S."/>
            <person name="Schroeder J.I."/>
            <person name="Ward J.M."/>
            <person name="Hirschi K."/>
            <person name="Sze H."/>
            <person name="Talke I.N."/>
            <person name="Amtmann A."/>
            <person name="Maathuis F.J.M."/>
            <person name="Sanders D."/>
            <person name="Harper J.F."/>
            <person name="Tchieu J."/>
            <person name="Gribskov M."/>
            <person name="Persans M.W."/>
            <person name="Salt D.E."/>
            <person name="Kim S.A."/>
            <person name="Guerinot M.L."/>
        </authorList>
    </citation>
    <scope>GENE FAMILY</scope>
    <scope>NOMENCLATURE</scope>
</reference>